<dbReference type="EC" id="2.4.2.9" evidence="1"/>
<dbReference type="EMBL" id="AY596297">
    <property type="protein sequence ID" value="AAV47370.1"/>
    <property type="molecule type" value="Genomic_DNA"/>
</dbReference>
<dbReference type="RefSeq" id="WP_011224308.1">
    <property type="nucleotide sequence ID" value="NC_006396.1"/>
</dbReference>
<dbReference type="SMR" id="Q5UZD3"/>
<dbReference type="STRING" id="272569.rrnAC2577"/>
<dbReference type="PaxDb" id="272569-rrnAC2577"/>
<dbReference type="EnsemblBacteria" id="AAV47370">
    <property type="protein sequence ID" value="AAV47370"/>
    <property type="gene ID" value="rrnAC2577"/>
</dbReference>
<dbReference type="GeneID" id="40153463"/>
<dbReference type="KEGG" id="hma:rrnAC2577"/>
<dbReference type="PATRIC" id="fig|272569.17.peg.3179"/>
<dbReference type="eggNOG" id="arCOG04128">
    <property type="taxonomic scope" value="Archaea"/>
</dbReference>
<dbReference type="HOGENOM" id="CLU_067096_2_0_2"/>
<dbReference type="UniPathway" id="UPA00574">
    <property type="reaction ID" value="UER00636"/>
</dbReference>
<dbReference type="Proteomes" id="UP000001169">
    <property type="component" value="Chromosome I"/>
</dbReference>
<dbReference type="GO" id="GO:0005525">
    <property type="term" value="F:GTP binding"/>
    <property type="evidence" value="ECO:0007669"/>
    <property type="project" value="UniProtKB-KW"/>
</dbReference>
<dbReference type="GO" id="GO:0000287">
    <property type="term" value="F:magnesium ion binding"/>
    <property type="evidence" value="ECO:0007669"/>
    <property type="project" value="UniProtKB-UniRule"/>
</dbReference>
<dbReference type="GO" id="GO:0004845">
    <property type="term" value="F:uracil phosphoribosyltransferase activity"/>
    <property type="evidence" value="ECO:0007669"/>
    <property type="project" value="UniProtKB-UniRule"/>
</dbReference>
<dbReference type="GO" id="GO:0044206">
    <property type="term" value="P:UMP salvage"/>
    <property type="evidence" value="ECO:0007669"/>
    <property type="project" value="UniProtKB-UniRule"/>
</dbReference>
<dbReference type="GO" id="GO:0006223">
    <property type="term" value="P:uracil salvage"/>
    <property type="evidence" value="ECO:0007669"/>
    <property type="project" value="InterPro"/>
</dbReference>
<dbReference type="CDD" id="cd06223">
    <property type="entry name" value="PRTases_typeI"/>
    <property type="match status" value="1"/>
</dbReference>
<dbReference type="Gene3D" id="3.40.50.2020">
    <property type="match status" value="1"/>
</dbReference>
<dbReference type="HAMAP" id="MF_01218_A">
    <property type="entry name" value="Upp_A"/>
    <property type="match status" value="1"/>
</dbReference>
<dbReference type="InterPro" id="IPR000836">
    <property type="entry name" value="PRibTrfase_dom"/>
</dbReference>
<dbReference type="InterPro" id="IPR029057">
    <property type="entry name" value="PRTase-like"/>
</dbReference>
<dbReference type="InterPro" id="IPR034331">
    <property type="entry name" value="Upp_A"/>
</dbReference>
<dbReference type="InterPro" id="IPR050054">
    <property type="entry name" value="UPRTase/APRTase"/>
</dbReference>
<dbReference type="InterPro" id="IPR005765">
    <property type="entry name" value="Ura_phspho_trans"/>
</dbReference>
<dbReference type="NCBIfam" id="NF001097">
    <property type="entry name" value="PRK00129.1"/>
    <property type="match status" value="1"/>
</dbReference>
<dbReference type="NCBIfam" id="TIGR01091">
    <property type="entry name" value="upp"/>
    <property type="match status" value="1"/>
</dbReference>
<dbReference type="PANTHER" id="PTHR32315">
    <property type="entry name" value="ADENINE PHOSPHORIBOSYLTRANSFERASE"/>
    <property type="match status" value="1"/>
</dbReference>
<dbReference type="PANTHER" id="PTHR32315:SF4">
    <property type="entry name" value="URACIL PHOSPHORIBOSYLTRANSFERASE, CHLOROPLASTIC"/>
    <property type="match status" value="1"/>
</dbReference>
<dbReference type="Pfam" id="PF14681">
    <property type="entry name" value="UPRTase"/>
    <property type="match status" value="1"/>
</dbReference>
<dbReference type="SUPFAM" id="SSF53271">
    <property type="entry name" value="PRTase-like"/>
    <property type="match status" value="1"/>
</dbReference>
<feature type="chain" id="PRO_0000120918" description="Uracil phosphoribosyltransferase">
    <location>
        <begin position="1"/>
        <end position="225"/>
    </location>
</feature>
<feature type="binding site" evidence="1">
    <location>
        <begin position="36"/>
        <end position="40"/>
    </location>
    <ligand>
        <name>GTP</name>
        <dbReference type="ChEBI" id="CHEBI:37565"/>
    </ligand>
</feature>
<feature type="binding site" evidence="1">
    <location>
        <position position="86"/>
    </location>
    <ligand>
        <name>5-phospho-alpha-D-ribose 1-diphosphate</name>
        <dbReference type="ChEBI" id="CHEBI:58017"/>
    </ligand>
</feature>
<feature type="binding site" evidence="1">
    <location>
        <position position="111"/>
    </location>
    <ligand>
        <name>5-phospho-alpha-D-ribose 1-diphosphate</name>
        <dbReference type="ChEBI" id="CHEBI:58017"/>
    </ligand>
</feature>
<feature type="binding site" evidence="1">
    <location>
        <begin position="145"/>
        <end position="153"/>
    </location>
    <ligand>
        <name>5-phospho-alpha-D-ribose 1-diphosphate</name>
        <dbReference type="ChEBI" id="CHEBI:58017"/>
    </ligand>
</feature>
<feature type="binding site" evidence="1">
    <location>
        <position position="210"/>
    </location>
    <ligand>
        <name>uracil</name>
        <dbReference type="ChEBI" id="CHEBI:17568"/>
    </ligand>
</feature>
<feature type="binding site" evidence="1">
    <location>
        <begin position="215"/>
        <end position="217"/>
    </location>
    <ligand>
        <name>uracil</name>
        <dbReference type="ChEBI" id="CHEBI:17568"/>
    </ligand>
</feature>
<feature type="binding site" evidence="1">
    <location>
        <position position="216"/>
    </location>
    <ligand>
        <name>5-phospho-alpha-D-ribose 1-diphosphate</name>
        <dbReference type="ChEBI" id="CHEBI:58017"/>
    </ligand>
</feature>
<name>UPP_HALMA</name>
<reference key="1">
    <citation type="journal article" date="2004" name="Genome Res.">
        <title>Genome sequence of Haloarcula marismortui: a halophilic archaeon from the Dead Sea.</title>
        <authorList>
            <person name="Baliga N.S."/>
            <person name="Bonneau R."/>
            <person name="Facciotti M.T."/>
            <person name="Pan M."/>
            <person name="Glusman G."/>
            <person name="Deutsch E.W."/>
            <person name="Shannon P."/>
            <person name="Chiu Y."/>
            <person name="Weng R.S."/>
            <person name="Gan R.R."/>
            <person name="Hung P."/>
            <person name="Date S.V."/>
            <person name="Marcotte E."/>
            <person name="Hood L."/>
            <person name="Ng W.V."/>
        </authorList>
    </citation>
    <scope>NUCLEOTIDE SEQUENCE [LARGE SCALE GENOMIC DNA]</scope>
    <source>
        <strain>ATCC 43049 / DSM 3752 / JCM 8966 / VKM B-1809</strain>
    </source>
</reference>
<keyword id="KW-0021">Allosteric enzyme</keyword>
<keyword id="KW-0328">Glycosyltransferase</keyword>
<keyword id="KW-0342">GTP-binding</keyword>
<keyword id="KW-0460">Magnesium</keyword>
<keyword id="KW-0547">Nucleotide-binding</keyword>
<keyword id="KW-1185">Reference proteome</keyword>
<keyword id="KW-0808">Transferase</keyword>
<accession>Q5UZD3</accession>
<gene>
    <name evidence="1" type="primary">upp</name>
    <name type="ordered locus">rrnAC2577</name>
</gene>
<organism>
    <name type="scientific">Haloarcula marismortui (strain ATCC 43049 / DSM 3752 / JCM 8966 / VKM B-1809)</name>
    <name type="common">Halobacterium marismortui</name>
    <dbReference type="NCBI Taxonomy" id="272569"/>
    <lineage>
        <taxon>Archaea</taxon>
        <taxon>Methanobacteriati</taxon>
        <taxon>Methanobacteriota</taxon>
        <taxon>Stenosarchaea group</taxon>
        <taxon>Halobacteria</taxon>
        <taxon>Halobacteriales</taxon>
        <taxon>Haloarculaceae</taxon>
        <taxon>Haloarcula</taxon>
    </lineage>
</organism>
<proteinExistence type="inferred from homology"/>
<sequence>MPIEQRGDASVVTHALARDELTRIRNVETEQVAFRKGLVRLGRICGYEIIDGRMETEYTEVQTPLTTTMGERVKGLEDVVIVNVLRAATPFVEGLLKAFPRARQGVISASRDEEAGMNDDGEFPISVEYVKLPEITEDDTVIIADPMLATGSTMATVLDYITSEKTEPENLLVLAAVSAPEGIVRVSEAQPDADIISVAIDDELDEDGFIVPGLGDAGDRAFRTT</sequence>
<evidence type="ECO:0000255" key="1">
    <source>
        <dbReference type="HAMAP-Rule" id="MF_01218"/>
    </source>
</evidence>
<protein>
    <recommendedName>
        <fullName evidence="1">Uracil phosphoribosyltransferase</fullName>
        <ecNumber evidence="1">2.4.2.9</ecNumber>
    </recommendedName>
    <alternativeName>
        <fullName evidence="1">UMP pyrophosphorylase</fullName>
    </alternativeName>
    <alternativeName>
        <fullName evidence="1">UPRTase</fullName>
    </alternativeName>
</protein>
<comment type="function">
    <text evidence="1">Catalyzes the conversion of uracil and 5-phospho-alpha-D-ribose 1-diphosphate (PRPP) to UMP and diphosphate.</text>
</comment>
<comment type="catalytic activity">
    <reaction evidence="1">
        <text>UMP + diphosphate = 5-phospho-alpha-D-ribose 1-diphosphate + uracil</text>
        <dbReference type="Rhea" id="RHEA:13017"/>
        <dbReference type="ChEBI" id="CHEBI:17568"/>
        <dbReference type="ChEBI" id="CHEBI:33019"/>
        <dbReference type="ChEBI" id="CHEBI:57865"/>
        <dbReference type="ChEBI" id="CHEBI:58017"/>
        <dbReference type="EC" id="2.4.2.9"/>
    </reaction>
</comment>
<comment type="cofactor">
    <cofactor evidence="1">
        <name>Mg(2+)</name>
        <dbReference type="ChEBI" id="CHEBI:18420"/>
    </cofactor>
    <text evidence="1">Binds 1 Mg(2+) ion per subunit. The magnesium is bound as Mg-PRPP.</text>
</comment>
<comment type="activity regulation">
    <text evidence="1">Allosterically activated by GTP.</text>
</comment>
<comment type="pathway">
    <text evidence="1">Pyrimidine metabolism; UMP biosynthesis via salvage pathway; UMP from uracil: step 1/1.</text>
</comment>
<comment type="similarity">
    <text evidence="1">Belongs to the UPRTase family.</text>
</comment>